<protein>
    <recommendedName>
        <fullName evidence="1">Urease accessory protein UreG</fullName>
    </recommendedName>
</protein>
<evidence type="ECO:0000255" key="1">
    <source>
        <dbReference type="HAMAP-Rule" id="MF_01389"/>
    </source>
</evidence>
<evidence type="ECO:0000305" key="2"/>
<name>UREG_YERE8</name>
<reference key="1">
    <citation type="journal article" date="2006" name="PLoS Genet.">
        <title>The complete genome sequence and comparative genome analysis of the high pathogenicity Yersinia enterocolitica strain 8081.</title>
        <authorList>
            <person name="Thomson N.R."/>
            <person name="Howard S."/>
            <person name="Wren B.W."/>
            <person name="Holden M.T.G."/>
            <person name="Crossman L."/>
            <person name="Challis G.L."/>
            <person name="Churcher C."/>
            <person name="Mungall K."/>
            <person name="Brooks K."/>
            <person name="Chillingworth T."/>
            <person name="Feltwell T."/>
            <person name="Abdellah Z."/>
            <person name="Hauser H."/>
            <person name="Jagels K."/>
            <person name="Maddison M."/>
            <person name="Moule S."/>
            <person name="Sanders M."/>
            <person name="Whitehead S."/>
            <person name="Quail M.A."/>
            <person name="Dougan G."/>
            <person name="Parkhill J."/>
            <person name="Prentice M.B."/>
        </authorList>
    </citation>
    <scope>NUCLEOTIDE SEQUENCE [LARGE SCALE GENOMIC DNA]</scope>
    <source>
        <strain>NCTC 13174 / 8081</strain>
    </source>
</reference>
<comment type="function">
    <text evidence="1">Facilitates the functional incorporation of the urease nickel metallocenter. This process requires GTP hydrolysis, probably effectuated by UreG.</text>
</comment>
<comment type="subunit">
    <text evidence="1">Homodimer. UreD, UreF and UreG form a complex that acts as a GTP-hydrolysis-dependent molecular chaperone, activating the urease apoprotein by helping to assemble the nickel containing metallocenter of UreC. The UreE protein probably delivers the nickel.</text>
</comment>
<comment type="subcellular location">
    <subcellularLocation>
        <location evidence="1">Cytoplasm</location>
    </subcellularLocation>
</comment>
<comment type="similarity">
    <text evidence="1">Belongs to the SIMIBI class G3E GTPase family. UreG subfamily.</text>
</comment>
<comment type="sequence caution" evidence="2">
    <conflict type="erroneous initiation">
        <sequence resource="EMBL-CDS" id="CAL11054"/>
    </conflict>
</comment>
<sequence>MNSHSTDKRKKITRIGIGGPVGSGKTAIIEVITPILIKRGIKPLIITNDIVTTEDAKQVKRTLKGILDEEKILGVETGACPHTAVREDPSMNIAAVEEMEERFPDSDLIMIESGGDNLTLTFSPALADFYIYVIDVAEGEKIPRKNGPGLVQADILVINKIDLAPYVGASLDVMESDTKVVRGERPYILTNCKTGQGIEELVDMIMRDFLFTHVQPQGEHA</sequence>
<feature type="chain" id="PRO_0000347457" description="Urease accessory protein UreG">
    <location>
        <begin position="1"/>
        <end position="221"/>
    </location>
</feature>
<feature type="binding site" evidence="1">
    <location>
        <begin position="19"/>
        <end position="26"/>
    </location>
    <ligand>
        <name>GTP</name>
        <dbReference type="ChEBI" id="CHEBI:37565"/>
    </ligand>
</feature>
<gene>
    <name evidence="1" type="primary">ureG</name>
    <name type="ordered locus">YE0956</name>
</gene>
<accession>A1JKE2</accession>
<proteinExistence type="inferred from homology"/>
<keyword id="KW-0143">Chaperone</keyword>
<keyword id="KW-0963">Cytoplasm</keyword>
<keyword id="KW-0342">GTP-binding</keyword>
<keyword id="KW-0996">Nickel insertion</keyword>
<keyword id="KW-0547">Nucleotide-binding</keyword>
<dbReference type="EMBL" id="AM286415">
    <property type="protein sequence ID" value="CAL11054.1"/>
    <property type="status" value="ALT_INIT"/>
    <property type="molecule type" value="Genomic_DNA"/>
</dbReference>
<dbReference type="RefSeq" id="WP_004390399.1">
    <property type="nucleotide sequence ID" value="NC_008800.1"/>
</dbReference>
<dbReference type="RefSeq" id="YP_001005290.1">
    <property type="nucleotide sequence ID" value="NC_008800.1"/>
</dbReference>
<dbReference type="SMR" id="A1JKE2"/>
<dbReference type="GeneID" id="93970016"/>
<dbReference type="KEGG" id="yen:YE0956"/>
<dbReference type="PATRIC" id="fig|393305.7.peg.1057"/>
<dbReference type="eggNOG" id="COG0378">
    <property type="taxonomic scope" value="Bacteria"/>
</dbReference>
<dbReference type="HOGENOM" id="CLU_072144_1_0_6"/>
<dbReference type="OrthoDB" id="9802035at2"/>
<dbReference type="Proteomes" id="UP000000642">
    <property type="component" value="Chromosome"/>
</dbReference>
<dbReference type="GO" id="GO:0005737">
    <property type="term" value="C:cytoplasm"/>
    <property type="evidence" value="ECO:0007669"/>
    <property type="project" value="UniProtKB-SubCell"/>
</dbReference>
<dbReference type="GO" id="GO:0005525">
    <property type="term" value="F:GTP binding"/>
    <property type="evidence" value="ECO:0007669"/>
    <property type="project" value="UniProtKB-KW"/>
</dbReference>
<dbReference type="GO" id="GO:0003924">
    <property type="term" value="F:GTPase activity"/>
    <property type="evidence" value="ECO:0007669"/>
    <property type="project" value="InterPro"/>
</dbReference>
<dbReference type="GO" id="GO:0016151">
    <property type="term" value="F:nickel cation binding"/>
    <property type="evidence" value="ECO:0007669"/>
    <property type="project" value="UniProtKB-UniRule"/>
</dbReference>
<dbReference type="GO" id="GO:0043419">
    <property type="term" value="P:urea catabolic process"/>
    <property type="evidence" value="ECO:0007669"/>
    <property type="project" value="InterPro"/>
</dbReference>
<dbReference type="Gene3D" id="3.40.50.300">
    <property type="entry name" value="P-loop containing nucleotide triphosphate hydrolases"/>
    <property type="match status" value="1"/>
</dbReference>
<dbReference type="HAMAP" id="MF_01389">
    <property type="entry name" value="UreG"/>
    <property type="match status" value="1"/>
</dbReference>
<dbReference type="InterPro" id="IPR003495">
    <property type="entry name" value="CobW/HypB/UreG_nucleotide-bd"/>
</dbReference>
<dbReference type="InterPro" id="IPR027417">
    <property type="entry name" value="P-loop_NTPase"/>
</dbReference>
<dbReference type="InterPro" id="IPR004400">
    <property type="entry name" value="UreG"/>
</dbReference>
<dbReference type="NCBIfam" id="TIGR00101">
    <property type="entry name" value="ureG"/>
    <property type="match status" value="1"/>
</dbReference>
<dbReference type="PANTHER" id="PTHR31715">
    <property type="entry name" value="UREASE ACCESSORY PROTEIN G"/>
    <property type="match status" value="1"/>
</dbReference>
<dbReference type="PANTHER" id="PTHR31715:SF0">
    <property type="entry name" value="UREASE ACCESSORY PROTEIN G"/>
    <property type="match status" value="1"/>
</dbReference>
<dbReference type="Pfam" id="PF02492">
    <property type="entry name" value="cobW"/>
    <property type="match status" value="1"/>
</dbReference>
<dbReference type="PIRSF" id="PIRSF005624">
    <property type="entry name" value="Ni-bind_GTPase"/>
    <property type="match status" value="1"/>
</dbReference>
<dbReference type="SUPFAM" id="SSF52540">
    <property type="entry name" value="P-loop containing nucleoside triphosphate hydrolases"/>
    <property type="match status" value="1"/>
</dbReference>
<organism>
    <name type="scientific">Yersinia enterocolitica serotype O:8 / biotype 1B (strain NCTC 13174 / 8081)</name>
    <dbReference type="NCBI Taxonomy" id="393305"/>
    <lineage>
        <taxon>Bacteria</taxon>
        <taxon>Pseudomonadati</taxon>
        <taxon>Pseudomonadota</taxon>
        <taxon>Gammaproteobacteria</taxon>
        <taxon>Enterobacterales</taxon>
        <taxon>Yersiniaceae</taxon>
        <taxon>Yersinia</taxon>
    </lineage>
</organism>